<accession>P0CY74</accession>
<feature type="peptide" id="PRO_0000409964" description="Conotoxin Bu17">
    <location>
        <begin position="1" status="less than"/>
        <end position="26"/>
    </location>
</feature>
<feature type="modified residue" description="Cysteine amide" evidence="1">
    <location>
        <position position="26"/>
    </location>
</feature>
<feature type="disulfide bond" evidence="1">
    <location>
        <begin position="4"/>
        <end position="19"/>
    </location>
</feature>
<feature type="disulfide bond" evidence="1">
    <location>
        <begin position="5"/>
        <end position="25"/>
    </location>
</feature>
<feature type="disulfide bond" evidence="1">
    <location>
        <begin position="15"/>
        <end position="26"/>
    </location>
</feature>
<feature type="non-terminal residue">
    <location>
        <position position="1"/>
    </location>
</feature>
<dbReference type="GO" id="GO:0005576">
    <property type="term" value="C:extracellular region"/>
    <property type="evidence" value="ECO:0007669"/>
    <property type="project" value="UniProtKB-SubCell"/>
</dbReference>
<dbReference type="GO" id="GO:0099106">
    <property type="term" value="F:ion channel regulator activity"/>
    <property type="evidence" value="ECO:0007669"/>
    <property type="project" value="UniProtKB-KW"/>
</dbReference>
<dbReference type="GO" id="GO:0090729">
    <property type="term" value="F:toxin activity"/>
    <property type="evidence" value="ECO:0007669"/>
    <property type="project" value="UniProtKB-KW"/>
</dbReference>
<evidence type="ECO:0000250" key="1"/>
<evidence type="ECO:0000305" key="2"/>
<keyword id="KW-0027">Amidation</keyword>
<keyword id="KW-1015">Disulfide bond</keyword>
<keyword id="KW-0872">Ion channel impairing toxin</keyword>
<keyword id="KW-0528">Neurotoxin</keyword>
<keyword id="KW-0964">Secreted</keyword>
<keyword id="KW-0800">Toxin</keyword>
<comment type="subcellular location">
    <subcellularLocation>
        <location evidence="1">Secreted</location>
    </subcellularLocation>
</comment>
<comment type="tissue specificity">
    <text>Expressed by the venom duct.</text>
</comment>
<comment type="domain">
    <text>The cysteine framework is III (CC-C-C-CC). Classified in the M-5 branch, since 5 residues stand between the fourth and the fifth cysteine residues.</text>
</comment>
<comment type="similarity">
    <text evidence="2">Belongs to the conotoxin M superfamily.</text>
</comment>
<proteinExistence type="evidence at transcript level"/>
<sequence>GLYCCQPKPNGQMMCNRWCEINSRCCGRR</sequence>
<protein>
    <recommendedName>
        <fullName>Conotoxin Bu17</fullName>
    </recommendedName>
</protein>
<reference key="1">
    <citation type="journal article" date="2011" name="BMC Genomics">
        <title>Characterization of the Conus bullatus genome and its venom-duct transcriptome.</title>
        <authorList>
            <person name="Hu H."/>
            <person name="Bandyopadhyay P.K."/>
            <person name="Olivera B.M."/>
            <person name="Yandell M."/>
        </authorList>
    </citation>
    <scope>NUCLEOTIDE SEQUENCE [MRNA]</scope>
    <source>
        <tissue>Venom duct</tissue>
    </source>
</reference>
<organism>
    <name type="scientific">Conus bullatus</name>
    <name type="common">Bubble cone</name>
    <dbReference type="NCBI Taxonomy" id="89438"/>
    <lineage>
        <taxon>Eukaryota</taxon>
        <taxon>Metazoa</taxon>
        <taxon>Spiralia</taxon>
        <taxon>Lophotrochozoa</taxon>
        <taxon>Mollusca</taxon>
        <taxon>Gastropoda</taxon>
        <taxon>Caenogastropoda</taxon>
        <taxon>Neogastropoda</taxon>
        <taxon>Conoidea</taxon>
        <taxon>Conidae</taxon>
        <taxon>Conus</taxon>
        <taxon>Textilia</taxon>
    </lineage>
</organism>
<name>CM17_CONBU</name>